<feature type="chain" id="PRO_0000403513" description="Flap endonuclease 1">
    <location>
        <begin position="1"/>
        <end position="382"/>
    </location>
</feature>
<feature type="region of interest" description="N-domain">
    <location>
        <begin position="1"/>
        <end position="104"/>
    </location>
</feature>
<feature type="region of interest" description="I-domain">
    <location>
        <begin position="122"/>
        <end position="253"/>
    </location>
</feature>
<feature type="region of interest" description="Interaction with PCNA" evidence="1">
    <location>
        <begin position="336"/>
        <end position="344"/>
    </location>
</feature>
<feature type="region of interest" description="Disordered" evidence="2">
    <location>
        <begin position="358"/>
        <end position="382"/>
    </location>
</feature>
<feature type="compositionally biased region" description="Basic and acidic residues" evidence="2">
    <location>
        <begin position="359"/>
        <end position="368"/>
    </location>
</feature>
<feature type="compositionally biased region" description="Basic residues" evidence="2">
    <location>
        <begin position="369"/>
        <end position="382"/>
    </location>
</feature>
<feature type="binding site" evidence="1">
    <location>
        <position position="34"/>
    </location>
    <ligand>
        <name>Mg(2+)</name>
        <dbReference type="ChEBI" id="CHEBI:18420"/>
        <label>1</label>
    </ligand>
</feature>
<feature type="binding site" evidence="1">
    <location>
        <position position="47"/>
    </location>
    <ligand>
        <name>DNA</name>
        <dbReference type="ChEBI" id="CHEBI:16991"/>
    </ligand>
</feature>
<feature type="binding site" evidence="1">
    <location>
        <position position="70"/>
    </location>
    <ligand>
        <name>DNA</name>
        <dbReference type="ChEBI" id="CHEBI:16991"/>
    </ligand>
</feature>
<feature type="binding site" evidence="1">
    <location>
        <position position="86"/>
    </location>
    <ligand>
        <name>Mg(2+)</name>
        <dbReference type="ChEBI" id="CHEBI:18420"/>
        <label>1</label>
    </ligand>
</feature>
<feature type="binding site" evidence="1">
    <location>
        <position position="158"/>
    </location>
    <ligand>
        <name>DNA</name>
        <dbReference type="ChEBI" id="CHEBI:16991"/>
    </ligand>
</feature>
<feature type="binding site" evidence="1">
    <location>
        <position position="158"/>
    </location>
    <ligand>
        <name>Mg(2+)</name>
        <dbReference type="ChEBI" id="CHEBI:18420"/>
        <label>1</label>
    </ligand>
</feature>
<feature type="binding site" evidence="1">
    <location>
        <position position="160"/>
    </location>
    <ligand>
        <name>Mg(2+)</name>
        <dbReference type="ChEBI" id="CHEBI:18420"/>
        <label>1</label>
    </ligand>
</feature>
<feature type="binding site" evidence="1">
    <location>
        <position position="179"/>
    </location>
    <ligand>
        <name>Mg(2+)</name>
        <dbReference type="ChEBI" id="CHEBI:18420"/>
        <label>2</label>
    </ligand>
</feature>
<feature type="binding site" evidence="1">
    <location>
        <position position="181"/>
    </location>
    <ligand>
        <name>Mg(2+)</name>
        <dbReference type="ChEBI" id="CHEBI:18420"/>
        <label>2</label>
    </ligand>
</feature>
<feature type="binding site" evidence="1">
    <location>
        <position position="231"/>
    </location>
    <ligand>
        <name>DNA</name>
        <dbReference type="ChEBI" id="CHEBI:16991"/>
    </ligand>
</feature>
<feature type="binding site" evidence="1">
    <location>
        <position position="233"/>
    </location>
    <ligand>
        <name>DNA</name>
        <dbReference type="ChEBI" id="CHEBI:16991"/>
    </ligand>
</feature>
<feature type="binding site" evidence="1">
    <location>
        <position position="233"/>
    </location>
    <ligand>
        <name>Mg(2+)</name>
        <dbReference type="ChEBI" id="CHEBI:18420"/>
        <label>2</label>
    </ligand>
</feature>
<name>FEN1_CAEEL</name>
<accession>Q9N3T2</accession>
<keyword id="KW-0227">DNA damage</keyword>
<keyword id="KW-0234">DNA repair</keyword>
<keyword id="KW-0235">DNA replication</keyword>
<keyword id="KW-0255">Endonuclease</keyword>
<keyword id="KW-0269">Exonuclease</keyword>
<keyword id="KW-0378">Hydrolase</keyword>
<keyword id="KW-0460">Magnesium</keyword>
<keyword id="KW-0479">Metal-binding</keyword>
<keyword id="KW-0496">Mitochondrion</keyword>
<keyword id="KW-0540">Nuclease</keyword>
<keyword id="KW-0539">Nucleus</keyword>
<keyword id="KW-0597">Phosphoprotein</keyword>
<keyword id="KW-1185">Reference proteome</keyword>
<protein>
    <recommendedName>
        <fullName evidence="1">Flap endonuclease 1</fullName>
        <shortName evidence="1">FEN-1</shortName>
        <ecNumber evidence="1">3.1.-.-</ecNumber>
    </recommendedName>
    <alternativeName>
        <fullName>Cell death-related nuclease 1</fullName>
    </alternativeName>
    <alternativeName>
        <fullName evidence="1">Flap structure-specific endonuclease 1</fullName>
    </alternativeName>
</protein>
<sequence>MGIKGLSQVIADNAPSAIKVNEMKAFFGRTVAIDASMCLYQFLIAVRQDGSQLQSEDGETTSHLMGMLNRTVRMFENGVKPVYVFDGKPPDMKGGELEKRSERRAEAEKALTEAKEKGDVKEAEKFERRLVKVTKQQNDEAKRLLGLMGIPVVEAPCEAEAQCAHLVKAGKVFGTVTEDMDALTFGSTVLLRHFLAPVAKKIPIKEFNLSLALEEMKLSVEEFIDLCILLGCDYCGTIRGVGPKKAVELIRQHKNIETILENIDQNKYPPPEDWPYKRARELFLNPEVTKPEEVELTWKEADVEGVIQFLCGEKNFNEERIRNALAKLKTSRKSGTQGRIDSFFGNSTKVTCVTAATKRKAEEAEKAKKGAKKGGPPKKRAK</sequence>
<proteinExistence type="evidence at protein level"/>
<organism>
    <name type="scientific">Caenorhabditis elegans</name>
    <dbReference type="NCBI Taxonomy" id="6239"/>
    <lineage>
        <taxon>Eukaryota</taxon>
        <taxon>Metazoa</taxon>
        <taxon>Ecdysozoa</taxon>
        <taxon>Nematoda</taxon>
        <taxon>Chromadorea</taxon>
        <taxon>Rhabditida</taxon>
        <taxon>Rhabditina</taxon>
        <taxon>Rhabditomorpha</taxon>
        <taxon>Rhabditoidea</taxon>
        <taxon>Rhabditidae</taxon>
        <taxon>Peloderinae</taxon>
        <taxon>Caenorhabditis</taxon>
    </lineage>
</organism>
<gene>
    <name evidence="1" type="primary">crn-1</name>
    <name type="ORF">Y47G6A.8</name>
</gene>
<comment type="function">
    <text evidence="1 3">Structure-specific nuclease with 5'-flap endonuclease and 5'-3' exonuclease activities involved in DNA replication and repair. During DNA replication, cleaves the 5'-overhanging flap structure that is generated by displacement synthesis when DNA polymerase encounters the 5'-end of a downstream Okazaki fragment. It enters the flap from the 5'-end and then tracks to cleave the flap base, leaving a nick for ligation. Also involved in the long patch base excision repair (LP-BER) pathway, by cleaving within the apurinic/apyrimidinic (AP) site-terminated flap. Acts as a genome stabilization factor that prevents flaps from equilibrating into structures that lead to duplications and deletions. Also possesses 5'-3' exonuclease activity on nicked or gapped double-stranded DNA, and exhibits RNase H activity. Also involved in replication and repair of rDNA and in repairing mitochondrial DNA (By similarity). Can associate and cooperate with cps-6 to promote stepwise DNA fragmentation, utilizing the endonuclease activity of cps-6 and both of its own 5'-3' exonuclease activity and gap-dependent endonuclease activity. May play a critical role in switching the state of cells from DNA replication/repair to DNA degradation during apoptosis.</text>
</comment>
<comment type="cofactor">
    <cofactor evidence="1">
        <name>Mg(2+)</name>
        <dbReference type="ChEBI" id="CHEBI:18420"/>
    </cofactor>
    <text evidence="1">Binds 2 magnesium ions per subunit. They probably participate in the reaction catalyzed by the enzyme. May bind an additional third magnesium ion after substrate binding.</text>
</comment>
<comment type="subunit">
    <text evidence="1 3">Interacts with PCNA. Three molecules of crn-1 bind to one PCNA trimer with each molecule binding to one PCNA monomer. PCNA stimulates the nuclease activity without altering cleavage specificity (By similarity). Interacts with cps-6.</text>
</comment>
<comment type="subcellular location">
    <subcellularLocation>
        <location evidence="1">Nucleus</location>
        <location evidence="1">Nucleolus</location>
    </subcellularLocation>
    <subcellularLocation>
        <location evidence="1">Nucleus</location>
        <location evidence="1">Nucleoplasm</location>
    </subcellularLocation>
    <subcellularLocation>
        <location evidence="1">Mitochondrion</location>
    </subcellularLocation>
    <text evidence="1">Resides mostly in the nucleoli and relocalizes to the nucleoplasm upon DNA damage.</text>
</comment>
<comment type="PTM">
    <text evidence="1">Phosphorylated. Phosphorylation upon DNA damage induces relocalization to the nuclear plasma.</text>
</comment>
<comment type="similarity">
    <text evidence="1">Belongs to the XPG/RAD2 endonuclease family. FEN1 subfamily.</text>
</comment>
<evidence type="ECO:0000255" key="1">
    <source>
        <dbReference type="HAMAP-Rule" id="MF_03140"/>
    </source>
</evidence>
<evidence type="ECO:0000256" key="2">
    <source>
        <dbReference type="SAM" id="MobiDB-lite"/>
    </source>
</evidence>
<evidence type="ECO:0000269" key="3">
    <source>
    </source>
</evidence>
<reference key="1">
    <citation type="journal article" date="2003" name="Mol. Cell">
        <title>Functional genomic analysis of apoptotic DNA degradation in C. elegans.</title>
        <authorList>
            <person name="Parrish J.Z."/>
            <person name="Xue D."/>
        </authorList>
    </citation>
    <scope>NUCLEOTIDE SEQUENCE [MRNA]</scope>
</reference>
<reference key="2">
    <citation type="journal article" date="1998" name="Science">
        <title>Genome sequence of the nematode C. elegans: a platform for investigating biology.</title>
        <authorList>
            <consortium name="The C. elegans sequencing consortium"/>
        </authorList>
    </citation>
    <scope>NUCLEOTIDE SEQUENCE [LARGE SCALE GENOMIC DNA]</scope>
    <source>
        <strain>Bristol N2</strain>
    </source>
</reference>
<reference key="3">
    <citation type="journal article" date="2003" name="EMBO J.">
        <title>CRN-1, a Caenorhabditis elegans FEN-1 homologue, cooperates with CPS-6/EndoG to promote apoptotic DNA degradation.</title>
        <authorList>
            <person name="Parrish J.Z."/>
            <person name="Yang C."/>
            <person name="Shen B."/>
            <person name="Xue D."/>
        </authorList>
    </citation>
    <scope>FUNCTION</scope>
    <scope>SUBCELLULAR LOCATION</scope>
    <scope>INTERACTION WITH CPS-6</scope>
</reference>
<dbReference type="EC" id="3.1.-.-" evidence="1"/>
<dbReference type="EMBL" id="AY303575">
    <property type="protein sequence ID" value="AAP57297.1"/>
    <property type="molecule type" value="mRNA"/>
</dbReference>
<dbReference type="EMBL" id="FO081580">
    <property type="protein sequence ID" value="CCD72553.1"/>
    <property type="molecule type" value="Genomic_DNA"/>
</dbReference>
<dbReference type="RefSeq" id="NP_491168.1">
    <property type="nucleotide sequence ID" value="NM_058767.9"/>
</dbReference>
<dbReference type="SMR" id="Q9N3T2"/>
<dbReference type="BioGRID" id="37393">
    <property type="interactions" value="18"/>
</dbReference>
<dbReference type="DIP" id="DIP-26974N"/>
<dbReference type="FunCoup" id="Q9N3T2">
    <property type="interactions" value="2726"/>
</dbReference>
<dbReference type="IntAct" id="Q9N3T2">
    <property type="interactions" value="2"/>
</dbReference>
<dbReference type="MINT" id="Q9N3T2"/>
<dbReference type="STRING" id="6239.Y47G6A.8.1"/>
<dbReference type="PaxDb" id="6239-Y47G6A.8"/>
<dbReference type="PeptideAtlas" id="Q9N3T2"/>
<dbReference type="EnsemblMetazoa" id="Y47G6A.8.1">
    <property type="protein sequence ID" value="Y47G6A.8.1"/>
    <property type="gene ID" value="WBGene00000794"/>
</dbReference>
<dbReference type="GeneID" id="171917"/>
<dbReference type="KEGG" id="cel:CELE_Y47G6A.8"/>
<dbReference type="UCSC" id="Y47G6A.8">
    <property type="organism name" value="c. elegans"/>
</dbReference>
<dbReference type="AGR" id="WB:WBGene00000794"/>
<dbReference type="CTD" id="171917"/>
<dbReference type="WormBase" id="Y47G6A.8">
    <property type="protein sequence ID" value="CE22109"/>
    <property type="gene ID" value="WBGene00000794"/>
    <property type="gene designation" value="crn-1"/>
</dbReference>
<dbReference type="eggNOG" id="KOG2519">
    <property type="taxonomic scope" value="Eukaryota"/>
</dbReference>
<dbReference type="GeneTree" id="ENSGT00940000155807"/>
<dbReference type="HOGENOM" id="CLU_032444_2_0_1"/>
<dbReference type="InParanoid" id="Q9N3T2"/>
<dbReference type="OMA" id="MGIPWVQ"/>
<dbReference type="OrthoDB" id="1937206at2759"/>
<dbReference type="PhylomeDB" id="Q9N3T2"/>
<dbReference type="Reactome" id="R-CEL-5651801">
    <property type="pathway name" value="PCNA-Dependent Long Patch Base Excision Repair"/>
</dbReference>
<dbReference type="Reactome" id="R-CEL-5685939">
    <property type="pathway name" value="HDR through MMEJ (alt-NHEJ)"/>
</dbReference>
<dbReference type="Reactome" id="R-CEL-69166">
    <property type="pathway name" value="Removal of the Flap Intermediate"/>
</dbReference>
<dbReference type="PRO" id="PR:Q9N3T2"/>
<dbReference type="Proteomes" id="UP000001940">
    <property type="component" value="Chromosome I"/>
</dbReference>
<dbReference type="Bgee" id="WBGene00000794">
    <property type="expression patterns" value="Expressed in embryo and 4 other cell types or tissues"/>
</dbReference>
<dbReference type="GO" id="GO:0005739">
    <property type="term" value="C:mitochondrion"/>
    <property type="evidence" value="ECO:0007669"/>
    <property type="project" value="UniProtKB-SubCell"/>
</dbReference>
<dbReference type="GO" id="GO:0005730">
    <property type="term" value="C:nucleolus"/>
    <property type="evidence" value="ECO:0007669"/>
    <property type="project" value="UniProtKB-SubCell"/>
</dbReference>
<dbReference type="GO" id="GO:0005654">
    <property type="term" value="C:nucleoplasm"/>
    <property type="evidence" value="ECO:0007669"/>
    <property type="project" value="UniProtKB-SubCell"/>
</dbReference>
<dbReference type="GO" id="GO:0005634">
    <property type="term" value="C:nucleus"/>
    <property type="evidence" value="ECO:0000314"/>
    <property type="project" value="WormBase"/>
</dbReference>
<dbReference type="GO" id="GO:0008409">
    <property type="term" value="F:5'-3' exonuclease activity"/>
    <property type="evidence" value="ECO:0000318"/>
    <property type="project" value="GO_Central"/>
</dbReference>
<dbReference type="GO" id="GO:0017108">
    <property type="term" value="F:5'-flap endonuclease activity"/>
    <property type="evidence" value="ECO:0000318"/>
    <property type="project" value="GO_Central"/>
</dbReference>
<dbReference type="GO" id="GO:0003677">
    <property type="term" value="F:DNA binding"/>
    <property type="evidence" value="ECO:0007669"/>
    <property type="project" value="UniProtKB-UniRule"/>
</dbReference>
<dbReference type="GO" id="GO:0048256">
    <property type="term" value="F:flap endonuclease activity"/>
    <property type="evidence" value="ECO:0000314"/>
    <property type="project" value="WormBase"/>
</dbReference>
<dbReference type="GO" id="GO:0000287">
    <property type="term" value="F:magnesium ion binding"/>
    <property type="evidence" value="ECO:0000318"/>
    <property type="project" value="GO_Central"/>
</dbReference>
<dbReference type="GO" id="GO:0030145">
    <property type="term" value="F:manganese ion binding"/>
    <property type="evidence" value="ECO:0000318"/>
    <property type="project" value="GO_Central"/>
</dbReference>
<dbReference type="GO" id="GO:0004523">
    <property type="term" value="F:RNA-DNA hybrid ribonuclease activity"/>
    <property type="evidence" value="ECO:0000318"/>
    <property type="project" value="GO_Central"/>
</dbReference>
<dbReference type="GO" id="GO:0006309">
    <property type="term" value="P:apoptotic DNA fragmentation"/>
    <property type="evidence" value="ECO:0000314"/>
    <property type="project" value="WormBase"/>
</dbReference>
<dbReference type="GO" id="GO:0006284">
    <property type="term" value="P:base-excision repair"/>
    <property type="evidence" value="ECO:0007669"/>
    <property type="project" value="UniProtKB-UniRule"/>
</dbReference>
<dbReference type="GO" id="GO:0006281">
    <property type="term" value="P:DNA repair"/>
    <property type="evidence" value="ECO:0000304"/>
    <property type="project" value="WormBase"/>
</dbReference>
<dbReference type="GO" id="GO:0006260">
    <property type="term" value="P:DNA replication"/>
    <property type="evidence" value="ECO:0000304"/>
    <property type="project" value="WormBase"/>
</dbReference>
<dbReference type="GO" id="GO:0043137">
    <property type="term" value="P:DNA replication, removal of RNA primer"/>
    <property type="evidence" value="ECO:0007669"/>
    <property type="project" value="UniProtKB-UniRule"/>
</dbReference>
<dbReference type="CDD" id="cd09907">
    <property type="entry name" value="H3TH_FEN1-Euk"/>
    <property type="match status" value="1"/>
</dbReference>
<dbReference type="CDD" id="cd09867">
    <property type="entry name" value="PIN_FEN1"/>
    <property type="match status" value="1"/>
</dbReference>
<dbReference type="FunFam" id="1.10.150.20:FF:000009">
    <property type="entry name" value="Flap endonuclease 1"/>
    <property type="match status" value="1"/>
</dbReference>
<dbReference type="FunFam" id="3.40.50.1010:FF:000003">
    <property type="entry name" value="Flap endonuclease 1"/>
    <property type="match status" value="1"/>
</dbReference>
<dbReference type="Gene3D" id="1.10.150.20">
    <property type="entry name" value="5' to 3' exonuclease, C-terminal subdomain"/>
    <property type="match status" value="1"/>
</dbReference>
<dbReference type="Gene3D" id="3.40.50.1010">
    <property type="entry name" value="5'-nuclease"/>
    <property type="match status" value="1"/>
</dbReference>
<dbReference type="HAMAP" id="MF_00614">
    <property type="entry name" value="Fen"/>
    <property type="match status" value="1"/>
</dbReference>
<dbReference type="InterPro" id="IPR036279">
    <property type="entry name" value="5-3_exonuclease_C_sf"/>
</dbReference>
<dbReference type="InterPro" id="IPR023426">
    <property type="entry name" value="Flap_endonuc"/>
</dbReference>
<dbReference type="InterPro" id="IPR008918">
    <property type="entry name" value="HhH2"/>
</dbReference>
<dbReference type="InterPro" id="IPR029060">
    <property type="entry name" value="PIN-like_dom_sf"/>
</dbReference>
<dbReference type="InterPro" id="IPR006086">
    <property type="entry name" value="XPG-I_dom"/>
</dbReference>
<dbReference type="InterPro" id="IPR006084">
    <property type="entry name" value="XPG/Rad2"/>
</dbReference>
<dbReference type="InterPro" id="IPR019974">
    <property type="entry name" value="XPG_CS"/>
</dbReference>
<dbReference type="InterPro" id="IPR006085">
    <property type="entry name" value="XPG_DNA_repair_N"/>
</dbReference>
<dbReference type="PANTHER" id="PTHR11081:SF9">
    <property type="entry name" value="FLAP ENDONUCLEASE 1"/>
    <property type="match status" value="1"/>
</dbReference>
<dbReference type="PANTHER" id="PTHR11081">
    <property type="entry name" value="FLAP ENDONUCLEASE FAMILY MEMBER"/>
    <property type="match status" value="1"/>
</dbReference>
<dbReference type="Pfam" id="PF00867">
    <property type="entry name" value="XPG_I"/>
    <property type="match status" value="1"/>
</dbReference>
<dbReference type="Pfam" id="PF00752">
    <property type="entry name" value="XPG_N"/>
    <property type="match status" value="1"/>
</dbReference>
<dbReference type="PRINTS" id="PR00853">
    <property type="entry name" value="XPGRADSUPER"/>
</dbReference>
<dbReference type="SMART" id="SM00279">
    <property type="entry name" value="HhH2"/>
    <property type="match status" value="1"/>
</dbReference>
<dbReference type="SMART" id="SM00484">
    <property type="entry name" value="XPGI"/>
    <property type="match status" value="1"/>
</dbReference>
<dbReference type="SMART" id="SM00485">
    <property type="entry name" value="XPGN"/>
    <property type="match status" value="1"/>
</dbReference>
<dbReference type="SUPFAM" id="SSF47807">
    <property type="entry name" value="5' to 3' exonuclease, C-terminal subdomain"/>
    <property type="match status" value="1"/>
</dbReference>
<dbReference type="SUPFAM" id="SSF88723">
    <property type="entry name" value="PIN domain-like"/>
    <property type="match status" value="1"/>
</dbReference>
<dbReference type="PROSITE" id="PS00841">
    <property type="entry name" value="XPG_1"/>
    <property type="match status" value="1"/>
</dbReference>
<dbReference type="PROSITE" id="PS00842">
    <property type="entry name" value="XPG_2"/>
    <property type="match status" value="1"/>
</dbReference>